<accession>Q5NPZ7</accession>
<keyword id="KW-0028">Amino-acid biosynthesis</keyword>
<keyword id="KW-0057">Aromatic amino acid biosynthesis</keyword>
<keyword id="KW-0456">Lyase</keyword>
<keyword id="KW-1185">Reference proteome</keyword>
<keyword id="KW-0822">Tryptophan biosynthesis</keyword>
<protein>
    <recommendedName>
        <fullName evidence="1">Tryptophan synthase alpha chain</fullName>
        <ecNumber evidence="1">4.2.1.20</ecNumber>
    </recommendedName>
</protein>
<comment type="function">
    <text evidence="1">The alpha subunit is responsible for the aldol cleavage of indoleglycerol phosphate to indole and glyceraldehyde 3-phosphate.</text>
</comment>
<comment type="catalytic activity">
    <reaction evidence="1">
        <text>(1S,2R)-1-C-(indol-3-yl)glycerol 3-phosphate + L-serine = D-glyceraldehyde 3-phosphate + L-tryptophan + H2O</text>
        <dbReference type="Rhea" id="RHEA:10532"/>
        <dbReference type="ChEBI" id="CHEBI:15377"/>
        <dbReference type="ChEBI" id="CHEBI:33384"/>
        <dbReference type="ChEBI" id="CHEBI:57912"/>
        <dbReference type="ChEBI" id="CHEBI:58866"/>
        <dbReference type="ChEBI" id="CHEBI:59776"/>
        <dbReference type="EC" id="4.2.1.20"/>
    </reaction>
</comment>
<comment type="pathway">
    <text evidence="1">Amino-acid biosynthesis; L-tryptophan biosynthesis; L-tryptophan from chorismate: step 5/5.</text>
</comment>
<comment type="subunit">
    <text evidence="1">Tetramer of two alpha and two beta chains.</text>
</comment>
<comment type="similarity">
    <text evidence="1">Belongs to the TrpA family.</text>
</comment>
<organism>
    <name type="scientific">Zymomonas mobilis subsp. mobilis (strain ATCC 31821 / ZM4 / CP4)</name>
    <dbReference type="NCBI Taxonomy" id="264203"/>
    <lineage>
        <taxon>Bacteria</taxon>
        <taxon>Pseudomonadati</taxon>
        <taxon>Pseudomonadota</taxon>
        <taxon>Alphaproteobacteria</taxon>
        <taxon>Sphingomonadales</taxon>
        <taxon>Zymomonadaceae</taxon>
        <taxon>Zymomonas</taxon>
    </lineage>
</organism>
<name>TRPA_ZYMMO</name>
<feature type="chain" id="PRO_0000098882" description="Tryptophan synthase alpha chain">
    <location>
        <begin position="1"/>
        <end position="274"/>
    </location>
</feature>
<feature type="active site" description="Proton acceptor" evidence="1">
    <location>
        <position position="49"/>
    </location>
</feature>
<feature type="active site" description="Proton acceptor" evidence="1">
    <location>
        <position position="60"/>
    </location>
</feature>
<gene>
    <name evidence="1" type="primary">trpA</name>
    <name type="ordered locus">ZMO0584</name>
</gene>
<dbReference type="EC" id="4.2.1.20" evidence="1"/>
<dbReference type="EMBL" id="AE008692">
    <property type="protein sequence ID" value="AAV89208.1"/>
    <property type="molecule type" value="Genomic_DNA"/>
</dbReference>
<dbReference type="RefSeq" id="WP_011240487.1">
    <property type="nucleotide sequence ID" value="NZ_CP035711.1"/>
</dbReference>
<dbReference type="SMR" id="Q5NPZ7"/>
<dbReference type="STRING" id="264203.ZMO0584"/>
<dbReference type="GeneID" id="79904228"/>
<dbReference type="KEGG" id="zmo:ZMO0584"/>
<dbReference type="eggNOG" id="COG0159">
    <property type="taxonomic scope" value="Bacteria"/>
</dbReference>
<dbReference type="HOGENOM" id="CLU_016734_0_0_5"/>
<dbReference type="UniPathway" id="UPA00035">
    <property type="reaction ID" value="UER00044"/>
</dbReference>
<dbReference type="Proteomes" id="UP000001173">
    <property type="component" value="Chromosome"/>
</dbReference>
<dbReference type="GO" id="GO:0005829">
    <property type="term" value="C:cytosol"/>
    <property type="evidence" value="ECO:0007669"/>
    <property type="project" value="TreeGrafter"/>
</dbReference>
<dbReference type="GO" id="GO:0004834">
    <property type="term" value="F:tryptophan synthase activity"/>
    <property type="evidence" value="ECO:0007669"/>
    <property type="project" value="UniProtKB-UniRule"/>
</dbReference>
<dbReference type="CDD" id="cd04724">
    <property type="entry name" value="Tryptophan_synthase_alpha"/>
    <property type="match status" value="1"/>
</dbReference>
<dbReference type="FunFam" id="3.20.20.70:FF:000037">
    <property type="entry name" value="Tryptophan synthase alpha chain"/>
    <property type="match status" value="1"/>
</dbReference>
<dbReference type="Gene3D" id="3.20.20.70">
    <property type="entry name" value="Aldolase class I"/>
    <property type="match status" value="1"/>
</dbReference>
<dbReference type="HAMAP" id="MF_00131">
    <property type="entry name" value="Trp_synth_alpha"/>
    <property type="match status" value="1"/>
</dbReference>
<dbReference type="InterPro" id="IPR013785">
    <property type="entry name" value="Aldolase_TIM"/>
</dbReference>
<dbReference type="InterPro" id="IPR011060">
    <property type="entry name" value="RibuloseP-bd_barrel"/>
</dbReference>
<dbReference type="InterPro" id="IPR018204">
    <property type="entry name" value="Trp_synthase_alpha_AS"/>
</dbReference>
<dbReference type="InterPro" id="IPR002028">
    <property type="entry name" value="Trp_synthase_suA"/>
</dbReference>
<dbReference type="NCBIfam" id="TIGR00262">
    <property type="entry name" value="trpA"/>
    <property type="match status" value="1"/>
</dbReference>
<dbReference type="PANTHER" id="PTHR43406:SF1">
    <property type="entry name" value="TRYPTOPHAN SYNTHASE ALPHA CHAIN, CHLOROPLASTIC"/>
    <property type="match status" value="1"/>
</dbReference>
<dbReference type="PANTHER" id="PTHR43406">
    <property type="entry name" value="TRYPTOPHAN SYNTHASE, ALPHA CHAIN"/>
    <property type="match status" value="1"/>
</dbReference>
<dbReference type="Pfam" id="PF00290">
    <property type="entry name" value="Trp_syntA"/>
    <property type="match status" value="1"/>
</dbReference>
<dbReference type="SUPFAM" id="SSF51366">
    <property type="entry name" value="Ribulose-phoshate binding barrel"/>
    <property type="match status" value="1"/>
</dbReference>
<dbReference type="PROSITE" id="PS00167">
    <property type="entry name" value="TRP_SYNTHASE_ALPHA"/>
    <property type="match status" value="1"/>
</dbReference>
<reference key="1">
    <citation type="journal article" date="2005" name="Nat. Biotechnol.">
        <title>The genome sequence of the ethanologenic bacterium Zymomonas mobilis ZM4.</title>
        <authorList>
            <person name="Seo J.-S."/>
            <person name="Chong H."/>
            <person name="Park H.S."/>
            <person name="Yoon K.-O."/>
            <person name="Jung C."/>
            <person name="Kim J.J."/>
            <person name="Hong J.H."/>
            <person name="Kim H."/>
            <person name="Kim J.-H."/>
            <person name="Kil J.-I."/>
            <person name="Park C.J."/>
            <person name="Oh H.-M."/>
            <person name="Lee J.-S."/>
            <person name="Jin S.-J."/>
            <person name="Um H.-W."/>
            <person name="Lee H.-J."/>
            <person name="Oh S.-J."/>
            <person name="Kim J.Y."/>
            <person name="Kang H.L."/>
            <person name="Lee S.Y."/>
            <person name="Lee K.J."/>
            <person name="Kang H.S."/>
        </authorList>
    </citation>
    <scope>NUCLEOTIDE SEQUENCE [LARGE SCALE GENOMIC DNA]</scope>
    <source>
        <strain>ATCC 31821 / ZM4 / CP4</strain>
    </source>
</reference>
<sequence length="274" mass="28838">MSRIANTFAKTKKENRAALIAFLTAGDPSIEATPALLDSLVENGVDIIELGMPFSDPMADGPAIQKANLRALAAKTGYNDIFRIATEFRKRHPETPLILMGYANPMTFKGSDSFAASAKEAGVDGIICVDIPPEEDATLGVAVREKGMDMIRLATPTSDEARLKIILDGASGFLYYVSVAGVTGLQQATEASIDAALDRIKAVTDLPVAVGFGIRSPEQAAAIAKKADAVVVGSAFVSCIEKAVTNRQDPNAALEKLAKELSTAISDARKEAAL</sequence>
<evidence type="ECO:0000255" key="1">
    <source>
        <dbReference type="HAMAP-Rule" id="MF_00131"/>
    </source>
</evidence>
<proteinExistence type="inferred from homology"/>